<accession>P52930</accession>
<comment type="function">
    <text evidence="1">May play the central regulatory role in sporulation. It may be an element of the effector pathway responsible for the activation of sporulation genes in response to nutritional stress. Spo0A may act in concert with Spo0H (a sigma factor) to control the expression of some genes that are critical to the sporulation process. Repressor of abrB, activator of the spoIIa operon. Binds the DNA sequence 5'-TGNCGAA-3' (0A box) (By similarity).</text>
</comment>
<comment type="cofactor">
    <cofactor evidence="1">
        <name>Ca(2+)</name>
        <dbReference type="ChEBI" id="CHEBI:29108"/>
    </cofactor>
    <text evidence="1">Binds 1 Ca(2+) ion per subunit.</text>
</comment>
<comment type="subcellular location">
    <subcellularLocation>
        <location evidence="4">Cytoplasm</location>
    </subcellularLocation>
</comment>
<comment type="PTM">
    <text evidence="1">Phosphorylated by KinA and KinB.</text>
</comment>
<protein>
    <recommendedName>
        <fullName>Stage 0 sporulation protein A</fullName>
    </recommendedName>
</protein>
<gene>
    <name type="primary">spo0A</name>
</gene>
<feature type="chain" id="PRO_0000081227" description="Stage 0 sporulation protein A">
    <location>
        <begin position="1" status="less than"/>
        <end position="150" status="greater than"/>
    </location>
</feature>
<feature type="domain" description="Response regulatory" evidence="3">
    <location>
        <begin position="1" status="less than"/>
        <end position="59"/>
    </location>
</feature>
<feature type="DNA-binding region" description="H-T-H motif" evidence="2">
    <location>
        <begin position="132"/>
        <end position="150" status="greater than"/>
    </location>
</feature>
<feature type="non-terminal residue">
    <location>
        <position position="1"/>
    </location>
</feature>
<feature type="non-terminal residue">
    <location>
        <position position="150"/>
    </location>
</feature>
<evidence type="ECO:0000250" key="1"/>
<evidence type="ECO:0000255" key="2"/>
<evidence type="ECO:0000255" key="3">
    <source>
        <dbReference type="PROSITE-ProRule" id="PRU00169"/>
    </source>
</evidence>
<evidence type="ECO:0000305" key="4"/>
<sequence length="150" mass="16844">LAVLEKMRHIERLKQPSVIMLTAFGQEDVTKKAVDLGASYFILKPFDMENLPSHIRQVSGKANTMIKRPLPSFRSATTVDGKPKNLDASITSIIHEIGVPAHIKGYMYLREAISMVYNDIELLGSITKVLYPDIAKKYNTTASRVERAIR</sequence>
<name>SP0A_BACCE</name>
<proteinExistence type="inferred from homology"/>
<dbReference type="EMBL" id="U09972">
    <property type="protein sequence ID" value="AAA18873.1"/>
    <property type="molecule type" value="Unassigned_DNA"/>
</dbReference>
<dbReference type="PIR" id="S60870">
    <property type="entry name" value="S60870"/>
</dbReference>
<dbReference type="SMR" id="P52930"/>
<dbReference type="eggNOG" id="COG0745">
    <property type="taxonomic scope" value="Bacteria"/>
</dbReference>
<dbReference type="GO" id="GO:0005737">
    <property type="term" value="C:cytoplasm"/>
    <property type="evidence" value="ECO:0007669"/>
    <property type="project" value="UniProtKB-SubCell"/>
</dbReference>
<dbReference type="GO" id="GO:0005509">
    <property type="term" value="F:calcium ion binding"/>
    <property type="evidence" value="ECO:0007669"/>
    <property type="project" value="InterPro"/>
</dbReference>
<dbReference type="GO" id="GO:0003677">
    <property type="term" value="F:DNA binding"/>
    <property type="evidence" value="ECO:0007669"/>
    <property type="project" value="UniProtKB-KW"/>
</dbReference>
<dbReference type="GO" id="GO:0003700">
    <property type="term" value="F:DNA-binding transcription factor activity"/>
    <property type="evidence" value="ECO:0007669"/>
    <property type="project" value="InterPro"/>
</dbReference>
<dbReference type="GO" id="GO:0051606">
    <property type="term" value="P:detection of stimulus"/>
    <property type="evidence" value="ECO:0007669"/>
    <property type="project" value="InterPro"/>
</dbReference>
<dbReference type="GO" id="GO:0000160">
    <property type="term" value="P:phosphorelay signal transduction system"/>
    <property type="evidence" value="ECO:0007669"/>
    <property type="project" value="UniProtKB-KW"/>
</dbReference>
<dbReference type="GO" id="GO:0042173">
    <property type="term" value="P:regulation of sporulation resulting in formation of a cellular spore"/>
    <property type="evidence" value="ECO:0007669"/>
    <property type="project" value="InterPro"/>
</dbReference>
<dbReference type="GO" id="GO:0030435">
    <property type="term" value="P:sporulation resulting in formation of a cellular spore"/>
    <property type="evidence" value="ECO:0007669"/>
    <property type="project" value="UniProtKB-KW"/>
</dbReference>
<dbReference type="Gene3D" id="3.40.50.2300">
    <property type="match status" value="1"/>
</dbReference>
<dbReference type="Gene3D" id="1.10.10.10">
    <property type="entry name" value="Winged helix-like DNA-binding domain superfamily/Winged helix DNA-binding domain"/>
    <property type="match status" value="1"/>
</dbReference>
<dbReference type="InterPro" id="IPR011006">
    <property type="entry name" value="CheY-like_superfamily"/>
</dbReference>
<dbReference type="InterPro" id="IPR016032">
    <property type="entry name" value="Sig_transdc_resp-reg_C-effctor"/>
</dbReference>
<dbReference type="InterPro" id="IPR001789">
    <property type="entry name" value="Sig_transdc_resp-reg_receiver"/>
</dbReference>
<dbReference type="InterPro" id="IPR014879">
    <property type="entry name" value="Spo0A_C"/>
</dbReference>
<dbReference type="InterPro" id="IPR012052">
    <property type="entry name" value="Spore_0_A"/>
</dbReference>
<dbReference type="InterPro" id="IPR036388">
    <property type="entry name" value="WH-like_DNA-bd_sf"/>
</dbReference>
<dbReference type="NCBIfam" id="TIGR02875">
    <property type="entry name" value="spore_0_A"/>
    <property type="match status" value="1"/>
</dbReference>
<dbReference type="Pfam" id="PF00072">
    <property type="entry name" value="Response_reg"/>
    <property type="match status" value="1"/>
</dbReference>
<dbReference type="Pfam" id="PF08769">
    <property type="entry name" value="Spo0A_C"/>
    <property type="match status" value="1"/>
</dbReference>
<dbReference type="SUPFAM" id="SSF46894">
    <property type="entry name" value="C-terminal effector domain of the bipartite response regulators"/>
    <property type="match status" value="1"/>
</dbReference>
<dbReference type="SUPFAM" id="SSF52172">
    <property type="entry name" value="CheY-like"/>
    <property type="match status" value="1"/>
</dbReference>
<dbReference type="PROSITE" id="PS50110">
    <property type="entry name" value="RESPONSE_REGULATORY"/>
    <property type="match status" value="1"/>
</dbReference>
<reference key="1">
    <citation type="journal article" date="1994" name="Mol. Microbiol.">
        <title>Characterization of spo0A homologues in diverse Bacillus and Clostridium species identifies a probable DNA-binding domain.</title>
        <authorList>
            <person name="Brown D.P."/>
            <person name="Ganova-Raeva L."/>
            <person name="Green B.D."/>
            <person name="Wilkinson S.R."/>
            <person name="Young M."/>
            <person name="Youngman P."/>
        </authorList>
    </citation>
    <scope>NUCLEOTIDE SEQUENCE [GENOMIC DNA]</scope>
    <source>
        <strain>ATCC 10876 / DSM 9378 / NRRL B-569</strain>
    </source>
</reference>
<organism>
    <name type="scientific">Bacillus cereus</name>
    <dbReference type="NCBI Taxonomy" id="1396"/>
    <lineage>
        <taxon>Bacteria</taxon>
        <taxon>Bacillati</taxon>
        <taxon>Bacillota</taxon>
        <taxon>Bacilli</taxon>
        <taxon>Bacillales</taxon>
        <taxon>Bacillaceae</taxon>
        <taxon>Bacillus</taxon>
        <taxon>Bacillus cereus group</taxon>
    </lineage>
</organism>
<keyword id="KW-0010">Activator</keyword>
<keyword id="KW-0106">Calcium</keyword>
<keyword id="KW-0963">Cytoplasm</keyword>
<keyword id="KW-0238">DNA-binding</keyword>
<keyword id="KW-0597">Phosphoprotein</keyword>
<keyword id="KW-0678">Repressor</keyword>
<keyword id="KW-0749">Sporulation</keyword>
<keyword id="KW-0804">Transcription</keyword>
<keyword id="KW-0805">Transcription regulation</keyword>
<keyword id="KW-0902">Two-component regulatory system</keyword>